<name>RL6_HAEIE</name>
<reference key="1">
    <citation type="journal article" date="2007" name="Genome Biol.">
        <title>Characterization and modeling of the Haemophilus influenzae core and supragenomes based on the complete genomic sequences of Rd and 12 clinical nontypeable strains.</title>
        <authorList>
            <person name="Hogg J.S."/>
            <person name="Hu F.Z."/>
            <person name="Janto B."/>
            <person name="Boissy R."/>
            <person name="Hayes J."/>
            <person name="Keefe R."/>
            <person name="Post J.C."/>
            <person name="Ehrlich G.D."/>
        </authorList>
    </citation>
    <scope>NUCLEOTIDE SEQUENCE [LARGE SCALE GENOMIC DNA]</scope>
    <source>
        <strain>PittEE</strain>
    </source>
</reference>
<gene>
    <name evidence="1" type="primary">rplF</name>
    <name type="ordered locus">CGSHiEE_08100</name>
</gene>
<proteinExistence type="inferred from homology"/>
<evidence type="ECO:0000255" key="1">
    <source>
        <dbReference type="HAMAP-Rule" id="MF_01365"/>
    </source>
</evidence>
<evidence type="ECO:0000305" key="2"/>
<feature type="chain" id="PRO_1000055236" description="Large ribosomal subunit protein uL6">
    <location>
        <begin position="1"/>
        <end position="177"/>
    </location>
</feature>
<keyword id="KW-0687">Ribonucleoprotein</keyword>
<keyword id="KW-0689">Ribosomal protein</keyword>
<keyword id="KW-0694">RNA-binding</keyword>
<keyword id="KW-0699">rRNA-binding</keyword>
<dbReference type="EMBL" id="CP000671">
    <property type="protein sequence ID" value="ABQ98933.1"/>
    <property type="molecule type" value="Genomic_DNA"/>
</dbReference>
<dbReference type="SMR" id="A5UDT2"/>
<dbReference type="KEGG" id="hip:CGSHiEE_08100"/>
<dbReference type="HOGENOM" id="CLU_065464_1_2_6"/>
<dbReference type="GO" id="GO:0022625">
    <property type="term" value="C:cytosolic large ribosomal subunit"/>
    <property type="evidence" value="ECO:0007669"/>
    <property type="project" value="TreeGrafter"/>
</dbReference>
<dbReference type="GO" id="GO:0019843">
    <property type="term" value="F:rRNA binding"/>
    <property type="evidence" value="ECO:0007669"/>
    <property type="project" value="UniProtKB-UniRule"/>
</dbReference>
<dbReference type="GO" id="GO:0003735">
    <property type="term" value="F:structural constituent of ribosome"/>
    <property type="evidence" value="ECO:0007669"/>
    <property type="project" value="InterPro"/>
</dbReference>
<dbReference type="GO" id="GO:0002181">
    <property type="term" value="P:cytoplasmic translation"/>
    <property type="evidence" value="ECO:0007669"/>
    <property type="project" value="TreeGrafter"/>
</dbReference>
<dbReference type="FunFam" id="3.90.930.12:FF:000001">
    <property type="entry name" value="50S ribosomal protein L6"/>
    <property type="match status" value="1"/>
</dbReference>
<dbReference type="FunFam" id="3.90.930.12:FF:000002">
    <property type="entry name" value="50S ribosomal protein L6"/>
    <property type="match status" value="1"/>
</dbReference>
<dbReference type="Gene3D" id="3.90.930.12">
    <property type="entry name" value="Ribosomal protein L6, alpha-beta domain"/>
    <property type="match status" value="2"/>
</dbReference>
<dbReference type="HAMAP" id="MF_01365_B">
    <property type="entry name" value="Ribosomal_uL6_B"/>
    <property type="match status" value="1"/>
</dbReference>
<dbReference type="InterPro" id="IPR000702">
    <property type="entry name" value="Ribosomal_uL6-like"/>
</dbReference>
<dbReference type="InterPro" id="IPR036789">
    <property type="entry name" value="Ribosomal_uL6-like_a/b-dom_sf"/>
</dbReference>
<dbReference type="InterPro" id="IPR020040">
    <property type="entry name" value="Ribosomal_uL6_a/b-dom"/>
</dbReference>
<dbReference type="InterPro" id="IPR019906">
    <property type="entry name" value="Ribosomal_uL6_bac-type"/>
</dbReference>
<dbReference type="InterPro" id="IPR002358">
    <property type="entry name" value="Ribosomal_uL6_CS"/>
</dbReference>
<dbReference type="NCBIfam" id="TIGR03654">
    <property type="entry name" value="L6_bact"/>
    <property type="match status" value="1"/>
</dbReference>
<dbReference type="PANTHER" id="PTHR11655">
    <property type="entry name" value="60S/50S RIBOSOMAL PROTEIN L6/L9"/>
    <property type="match status" value="1"/>
</dbReference>
<dbReference type="PANTHER" id="PTHR11655:SF14">
    <property type="entry name" value="LARGE RIBOSOMAL SUBUNIT PROTEIN UL6M"/>
    <property type="match status" value="1"/>
</dbReference>
<dbReference type="Pfam" id="PF00347">
    <property type="entry name" value="Ribosomal_L6"/>
    <property type="match status" value="2"/>
</dbReference>
<dbReference type="PIRSF" id="PIRSF002162">
    <property type="entry name" value="Ribosomal_L6"/>
    <property type="match status" value="1"/>
</dbReference>
<dbReference type="PRINTS" id="PR00059">
    <property type="entry name" value="RIBOSOMALL6"/>
</dbReference>
<dbReference type="SUPFAM" id="SSF56053">
    <property type="entry name" value="Ribosomal protein L6"/>
    <property type="match status" value="2"/>
</dbReference>
<dbReference type="PROSITE" id="PS00525">
    <property type="entry name" value="RIBOSOMAL_L6_1"/>
    <property type="match status" value="1"/>
</dbReference>
<organism>
    <name type="scientific">Haemophilus influenzae (strain PittEE)</name>
    <dbReference type="NCBI Taxonomy" id="374930"/>
    <lineage>
        <taxon>Bacteria</taxon>
        <taxon>Pseudomonadati</taxon>
        <taxon>Pseudomonadota</taxon>
        <taxon>Gammaproteobacteria</taxon>
        <taxon>Pasteurellales</taxon>
        <taxon>Pasteurellaceae</taxon>
        <taxon>Haemophilus</taxon>
    </lineage>
</organism>
<accession>A5UDT2</accession>
<comment type="function">
    <text evidence="1">This protein binds to the 23S rRNA, and is important in its secondary structure. It is located near the subunit interface in the base of the L7/L12 stalk, and near the tRNA binding site of the peptidyltransferase center.</text>
</comment>
<comment type="subunit">
    <text evidence="1">Part of the 50S ribosomal subunit.</text>
</comment>
<comment type="similarity">
    <text evidence="1">Belongs to the universal ribosomal protein uL6 family.</text>
</comment>
<sequence length="177" mass="19078">MSRVAKAPVNIPAGVEVKLDGQLLTVKGKNGELSRKIHESVEVKQDNGQFTFTPREGFVEANAQSGTARALVNAMVIGVTEGFTKKLVLVGVGYRAQLKGNAIALSLGYSHPVEHTLPVGITAECPSQTEIVLKGADKQLIGQVAADIRAYRRPEPYKGKGVRYADEVVRIKEAKKK</sequence>
<protein>
    <recommendedName>
        <fullName evidence="1">Large ribosomal subunit protein uL6</fullName>
    </recommendedName>
    <alternativeName>
        <fullName evidence="2">50S ribosomal protein L6</fullName>
    </alternativeName>
</protein>